<name>AB40G_ARATH</name>
<keyword id="KW-0938">Abscisic acid signaling pathway</keyword>
<keyword id="KW-0067">ATP-binding</keyword>
<keyword id="KW-1003">Cell membrane</keyword>
<keyword id="KW-0325">Glycoprotein</keyword>
<keyword id="KW-0472">Membrane</keyword>
<keyword id="KW-0547">Nucleotide-binding</keyword>
<keyword id="KW-0597">Phosphoprotein</keyword>
<keyword id="KW-0611">Plant defense</keyword>
<keyword id="KW-1185">Reference proteome</keyword>
<keyword id="KW-0677">Repeat</keyword>
<keyword id="KW-0346">Stress response</keyword>
<keyword id="KW-0812">Transmembrane</keyword>
<keyword id="KW-1133">Transmembrane helix</keyword>
<keyword id="KW-0813">Transport</keyword>
<comment type="function">
    <text evidence="1 7 8 9 12 17 18">High affinity abscisic acid (ABA) transporter that mediates the import of ABA, with a preference for (+)-ABA, through the plasma membrane, especially in guard cells, and is involved in the intercellular and intracellular ABA signaling pathways leading, for example, to stomatal closure, thus conferring drought tolerance (PubMed:20133880, PubMed:20935463, PubMed:26517905). Together with ABCG30, import into the embryo the ABA delivered from the endosperm via ABCG25 and ABCG31-mediated export to suppress radicle extension and subsequent embryonic growth (PubMed:26334616). May be a general defense protein (By similarity). Functions as a pump to exclude Pb(2+) ions and/or Pb(2+)-containing toxic compounds from the cytoplasm. Contributes to Pb(2+) ions resistance. Confers some resistance to the terpene sclareol (PubMed:14526118, PubMed:15923333).</text>
</comment>
<comment type="function">
    <text evidence="11">(Microbial infection) Involved in resistance response to the pathogenic oomycetes Phytophthora infestans and Phytophthora capsici.</text>
</comment>
<comment type="catalytic activity">
    <reaction evidence="9 12">
        <text>abscisate(out) + ATP + H2O = abscisate(in) + ADP + phosphate + H(+)</text>
        <dbReference type="Rhea" id="RHEA:63960"/>
        <dbReference type="ChEBI" id="CHEBI:15377"/>
        <dbReference type="ChEBI" id="CHEBI:15378"/>
        <dbReference type="ChEBI" id="CHEBI:30616"/>
        <dbReference type="ChEBI" id="CHEBI:43474"/>
        <dbReference type="ChEBI" id="CHEBI:62432"/>
        <dbReference type="ChEBI" id="CHEBI:456216"/>
    </reaction>
    <physiologicalReaction direction="left-to-right" evidence="9 12">
        <dbReference type="Rhea" id="RHEA:63961"/>
    </physiologicalReaction>
</comment>
<comment type="activity regulation">
    <text evidence="9">Inhibited by glibenclamide, verapamil and vanadate (ABC transporters inhibitors).</text>
</comment>
<comment type="biophysicochemical properties">
    <kinetics>
        <KM evidence="9">1 uM for abscisic acid</KM>
    </kinetics>
</comment>
<comment type="subunit">
    <text evidence="11">Interacts with LECRK91 and LECRK92.</text>
</comment>
<comment type="subcellular location">
    <subcellularLocation>
        <location evidence="8 9">Cell membrane</location>
        <topology evidence="2">Multi-pass membrane protein</topology>
    </subcellularLocation>
</comment>
<comment type="tissue specificity">
    <text evidence="6 7 8 9 10 12">Mostly observed in inflorescence meristems relative to cauline leaves and developing siliques (PubMed:22525244). Ubiquitous with higher levels in leaves, stems and flowers (PubMed:12430018, PubMed:14526118, PubMed:15923333, PubMed:20133880). Also present in primary and lateral roots (PubMed:20133880). In seeds, mainly expressed in the embryo and, to a lesser extent, in the endosperm (PubMed:26334616).</text>
</comment>
<comment type="developmental stage">
    <text evidence="9">In leaves, mostly observed in guard cells.</text>
</comment>
<comment type="induction">
    <text evidence="6 7 8 9 10 13">Circadian-regulation. Expression increase during the dark phase and decrease during the light phase. Induced by cycloheximide (CHX), sclareol, and heavy metals such as Pb(2+) ions. ETR1-, EIN2-, JAR1-, NPR1- and EDS5-dependent induction by incompatible fungal pathogens (A.brassicicola), by compatible fungal pathogens (S.sclerotiorum and F.oxysporum), and by compatible bacterial pathogens (P.syringae pv tomato). Also induced by phytohormones such as salicylic acid (SA), methyl jasmonate (MeJA) and ethylene. Induced by abscisic acid (ABA) treatment and drought via a WRKY1-mediated regulation (PubMed:20133880, PubMed:26820136). In cauline leaves, activated by cold stress, but repressed by heat stress (PubMed:22525244). Within inflorescence meristems, down-regulated by both cold and heat stress treatments (PubMed:22525244). In developing siliques, activated by cold stress, but unaffected by heat stress (PubMed:22525244).</text>
</comment>
<comment type="disruption phenotype">
    <text evidence="9 11 12">Increased susceptibility to the oomycetes Phytophthora brassicae and Phytophthora capsici (PubMed:26011556). Decreased abscisic acid (ABA) uptake through the plasma membrane and strongly delayed up-regulation of ABA responsive genes (e.g. NCED3, ABR1 and RD29B), and associated with a slow stomatal closure in response to ABA and osmotic stress resulting in reduced drought tolerance (PubMed:20133880). Impairment in ABA regulation of seed germination and root development (PubMed:20133880). Early seeds germination on imbibition without stratification, and reduced abscisic acid (ABA)-mediated inhibition of seeds germination (PubMed:26334616).</text>
</comment>
<comment type="similarity">
    <text evidence="19">Belongs to the ABC transporter superfamily. ABCG family. PDR (TC 3.A.1.205) subfamily.</text>
</comment>
<feature type="chain" id="PRO_0000234639" description="ABC transporter G family member 40">
    <location>
        <begin position="1"/>
        <end position="1423"/>
    </location>
</feature>
<feature type="transmembrane region" description="Helical" evidence="2">
    <location>
        <begin position="523"/>
        <end position="543"/>
    </location>
</feature>
<feature type="transmembrane region" description="Helical" evidence="2">
    <location>
        <begin position="562"/>
        <end position="582"/>
    </location>
</feature>
<feature type="transmembrane region" description="Helical" evidence="2">
    <location>
        <begin position="611"/>
        <end position="631"/>
    </location>
</feature>
<feature type="transmembrane region" description="Helical" evidence="2">
    <location>
        <begin position="643"/>
        <end position="663"/>
    </location>
</feature>
<feature type="transmembrane region" description="Helical" evidence="2">
    <location>
        <begin position="667"/>
        <end position="687"/>
    </location>
</feature>
<feature type="transmembrane region" description="Helical" evidence="2">
    <location>
        <begin position="696"/>
        <end position="716"/>
    </location>
</feature>
<feature type="transmembrane region" description="Helical" evidence="2">
    <location>
        <begin position="756"/>
        <end position="776"/>
    </location>
</feature>
<feature type="transmembrane region" description="Helical" evidence="2">
    <location>
        <begin position="1174"/>
        <end position="1194"/>
    </location>
</feature>
<feature type="transmembrane region" description="Helical" evidence="2">
    <location>
        <begin position="1207"/>
        <end position="1227"/>
    </location>
</feature>
<feature type="transmembrane region" description="Helical" evidence="2">
    <location>
        <begin position="1257"/>
        <end position="1277"/>
    </location>
</feature>
<feature type="transmembrane region" description="Helical" evidence="2">
    <location>
        <begin position="1284"/>
        <end position="1304"/>
    </location>
</feature>
<feature type="transmembrane region" description="Helical" evidence="2">
    <location>
        <begin position="1314"/>
        <end position="1334"/>
    </location>
</feature>
<feature type="transmembrane region" description="Helical" evidence="2">
    <location>
        <begin position="1341"/>
        <end position="1361"/>
    </location>
</feature>
<feature type="transmembrane region" description="Helical" evidence="2">
    <location>
        <begin position="1395"/>
        <end position="1415"/>
    </location>
</feature>
<feature type="domain" description="ABC transporter 1" evidence="3">
    <location>
        <begin position="154"/>
        <end position="427"/>
    </location>
</feature>
<feature type="domain" description="ABC transmembrane type-2 1" evidence="2">
    <location>
        <begin position="505"/>
        <end position="718"/>
    </location>
</feature>
<feature type="domain" description="ABC transporter 2" evidence="3">
    <location>
        <begin position="825"/>
        <end position="1077"/>
    </location>
</feature>
<feature type="domain" description="ABC transmembrane type-2 2" evidence="2">
    <location>
        <begin position="1150"/>
        <end position="1364"/>
    </location>
</feature>
<feature type="region of interest" description="Disordered" evidence="5">
    <location>
        <begin position="1"/>
        <end position="36"/>
    </location>
</feature>
<feature type="compositionally biased region" description="Polar residues" evidence="5">
    <location>
        <begin position="1"/>
        <end position="19"/>
    </location>
</feature>
<feature type="compositionally biased region" description="Basic and acidic residues" evidence="5">
    <location>
        <begin position="20"/>
        <end position="34"/>
    </location>
</feature>
<feature type="binding site" evidence="3">
    <location>
        <begin position="187"/>
        <end position="194"/>
    </location>
    <ligand>
        <name>ATP</name>
        <dbReference type="ChEBI" id="CHEBI:30616"/>
        <label>1</label>
    </ligand>
</feature>
<feature type="binding site" evidence="3">
    <location>
        <begin position="870"/>
        <end position="877"/>
    </location>
    <ligand>
        <name>ATP</name>
        <dbReference type="ChEBI" id="CHEBI:30616"/>
        <label>2</label>
    </ligand>
</feature>
<feature type="modified residue" description="Phosphothreonine" evidence="22">
    <location>
        <position position="962"/>
    </location>
</feature>
<feature type="glycosylation site" description="N-linked (GlcNAc...) asparagine" evidence="4">
    <location>
        <position position="16"/>
    </location>
</feature>
<feature type="glycosylation site" description="N-linked (GlcNAc...) asparagine" evidence="4">
    <location>
        <position position="376"/>
    </location>
</feature>
<feature type="glycosylation site" description="N-linked (GlcNAc...) asparagine" evidence="4">
    <location>
        <position position="729"/>
    </location>
</feature>
<feature type="glycosylation site" description="N-linked (GlcNAc...) asparagine" evidence="4">
    <location>
        <position position="895"/>
    </location>
</feature>
<feature type="glycosylation site" description="N-linked (GlcNAc...) asparagine" evidence="4">
    <location>
        <position position="1375"/>
    </location>
</feature>
<organism>
    <name type="scientific">Arabidopsis thaliana</name>
    <name type="common">Mouse-ear cress</name>
    <dbReference type="NCBI Taxonomy" id="3702"/>
    <lineage>
        <taxon>Eukaryota</taxon>
        <taxon>Viridiplantae</taxon>
        <taxon>Streptophyta</taxon>
        <taxon>Embryophyta</taxon>
        <taxon>Tracheophyta</taxon>
        <taxon>Spermatophyta</taxon>
        <taxon>Magnoliopsida</taxon>
        <taxon>eudicotyledons</taxon>
        <taxon>Gunneridae</taxon>
        <taxon>Pentapetalae</taxon>
        <taxon>rosids</taxon>
        <taxon>malvids</taxon>
        <taxon>Brassicales</taxon>
        <taxon>Brassicaceae</taxon>
        <taxon>Camelineae</taxon>
        <taxon>Arabidopsis</taxon>
    </lineage>
</organism>
<accession>Q9M9E1</accession>
<reference key="1">
    <citation type="journal article" date="2000" name="Nature">
        <title>Sequence and analysis of chromosome 1 of the plant Arabidopsis thaliana.</title>
        <authorList>
            <person name="Theologis A."/>
            <person name="Ecker J.R."/>
            <person name="Palm C.J."/>
            <person name="Federspiel N.A."/>
            <person name="Kaul S."/>
            <person name="White O."/>
            <person name="Alonso J."/>
            <person name="Altafi H."/>
            <person name="Araujo R."/>
            <person name="Bowman C.L."/>
            <person name="Brooks S.Y."/>
            <person name="Buehler E."/>
            <person name="Chan A."/>
            <person name="Chao Q."/>
            <person name="Chen H."/>
            <person name="Cheuk R.F."/>
            <person name="Chin C.W."/>
            <person name="Chung M.K."/>
            <person name="Conn L."/>
            <person name="Conway A.B."/>
            <person name="Conway A.R."/>
            <person name="Creasy T.H."/>
            <person name="Dewar K."/>
            <person name="Dunn P."/>
            <person name="Etgu P."/>
            <person name="Feldblyum T.V."/>
            <person name="Feng J.-D."/>
            <person name="Fong B."/>
            <person name="Fujii C.Y."/>
            <person name="Gill J.E."/>
            <person name="Goldsmith A.D."/>
            <person name="Haas B."/>
            <person name="Hansen N.F."/>
            <person name="Hughes B."/>
            <person name="Huizar L."/>
            <person name="Hunter J.L."/>
            <person name="Jenkins J."/>
            <person name="Johnson-Hopson C."/>
            <person name="Khan S."/>
            <person name="Khaykin E."/>
            <person name="Kim C.J."/>
            <person name="Koo H.L."/>
            <person name="Kremenetskaia I."/>
            <person name="Kurtz D.B."/>
            <person name="Kwan A."/>
            <person name="Lam B."/>
            <person name="Langin-Hooper S."/>
            <person name="Lee A."/>
            <person name="Lee J.M."/>
            <person name="Lenz C.A."/>
            <person name="Li J.H."/>
            <person name="Li Y.-P."/>
            <person name="Lin X."/>
            <person name="Liu S.X."/>
            <person name="Liu Z.A."/>
            <person name="Luros J.S."/>
            <person name="Maiti R."/>
            <person name="Marziali A."/>
            <person name="Militscher J."/>
            <person name="Miranda M."/>
            <person name="Nguyen M."/>
            <person name="Nierman W.C."/>
            <person name="Osborne B.I."/>
            <person name="Pai G."/>
            <person name="Peterson J."/>
            <person name="Pham P.K."/>
            <person name="Rizzo M."/>
            <person name="Rooney T."/>
            <person name="Rowley D."/>
            <person name="Sakano H."/>
            <person name="Salzberg S.L."/>
            <person name="Schwartz J.R."/>
            <person name="Shinn P."/>
            <person name="Southwick A.M."/>
            <person name="Sun H."/>
            <person name="Tallon L.J."/>
            <person name="Tambunga G."/>
            <person name="Toriumi M.J."/>
            <person name="Town C.D."/>
            <person name="Utterback T."/>
            <person name="Van Aken S."/>
            <person name="Vaysberg M."/>
            <person name="Vysotskaia V.S."/>
            <person name="Walker M."/>
            <person name="Wu D."/>
            <person name="Yu G."/>
            <person name="Fraser C.M."/>
            <person name="Venter J.C."/>
            <person name="Davis R.W."/>
        </authorList>
    </citation>
    <scope>NUCLEOTIDE SEQUENCE [LARGE SCALE GENOMIC DNA]</scope>
    <source>
        <strain>cv. Columbia</strain>
    </source>
</reference>
<reference key="2">
    <citation type="journal article" date="2017" name="Plant J.">
        <title>Araport11: a complete reannotation of the Arabidopsis thaliana reference genome.</title>
        <authorList>
            <person name="Cheng C.Y."/>
            <person name="Krishnakumar V."/>
            <person name="Chan A.P."/>
            <person name="Thibaud-Nissen F."/>
            <person name="Schobel S."/>
            <person name="Town C.D."/>
        </authorList>
    </citation>
    <scope>GENOME REANNOTATION</scope>
    <source>
        <strain>cv. Columbia</strain>
    </source>
</reference>
<reference key="3">
    <citation type="journal article" date="2002" name="Planta">
        <title>The plant PDR family of ABC transporters.</title>
        <authorList>
            <person name="van den Brule S."/>
            <person name="Smart C.C."/>
        </authorList>
    </citation>
    <scope>IDENTIFICATION</scope>
    <scope>TISSUE SPECIFICITY</scope>
    <scope>INDUCTION</scope>
</reference>
<reference key="4">
    <citation type="journal article" date="2003" name="Plant Physiol.">
        <title>Pathogen-responsive expression of a putative ATP-binding cassette transporter gene conferring resistance to the diterpenoid sclareol is regulated by multiple defense signaling pathways in Arabidopsis.</title>
        <authorList>
            <person name="Campbell E.J."/>
            <person name="Schenk P.M."/>
            <person name="Kazan K."/>
            <person name="Penninckx I.A.M.A."/>
            <person name="Anderson J.P."/>
            <person name="Maclean D.J."/>
            <person name="Cammue B.P.A."/>
            <person name="Ebert P.R."/>
            <person name="Manners J.M."/>
        </authorList>
    </citation>
    <scope>FUNCTION</scope>
    <scope>INDUCTION</scope>
    <scope>TISSUE SPECIFICITY</scope>
</reference>
<reference key="5">
    <citation type="journal article" date="2005" name="Plant Physiol.">
        <title>AtPDR12 contributes to lead resistance in Arabidopsis.</title>
        <authorList>
            <person name="Lee M."/>
            <person name="Lee K."/>
            <person name="Lee J."/>
            <person name="Noh E.W."/>
            <person name="Lee Y."/>
        </authorList>
    </citation>
    <scope>FUNCTION</scope>
    <scope>TISSUE SPECIFICITY</scope>
    <scope>INDUCTION</scope>
    <scope>SUBCELLULAR LOCATION</scope>
</reference>
<reference key="6">
    <citation type="journal article" date="2006" name="FEBS Lett.">
        <title>Organization and function of the plant pleiotropic drug resistance ABC transporter family.</title>
        <authorList>
            <person name="Crouzet J."/>
            <person name="Trombik T."/>
            <person name="Fraysse A.S."/>
            <person name="Boutry M."/>
        </authorList>
    </citation>
    <scope>GENE FAMILY</scope>
    <scope>NOMENCLATURE</scope>
</reference>
<reference key="7">
    <citation type="journal article" date="2008" name="Trends Plant Sci.">
        <title>Plant ABC proteins - a unified nomenclature and updated inventory.</title>
        <authorList>
            <person name="Verrier P.J."/>
            <person name="Bird D."/>
            <person name="Burla B."/>
            <person name="Dassa E."/>
            <person name="Forestier C."/>
            <person name="Geisler M."/>
            <person name="Klein M."/>
            <person name="Kolukisaoglu H.U."/>
            <person name="Lee Y."/>
            <person name="Martinoia E."/>
            <person name="Murphy A."/>
            <person name="Rea P.A."/>
            <person name="Samuels L."/>
            <person name="Schulz B."/>
            <person name="Spalding E.J."/>
            <person name="Yazaki K."/>
            <person name="Theodoulou F.L."/>
        </authorList>
    </citation>
    <scope>GENE FAMILY</scope>
    <scope>NOMENCLATURE</scope>
</reference>
<reference key="8">
    <citation type="journal article" date="2009" name="J. Proteomics">
        <title>Phosphoproteomic analysis of nuclei-enriched fractions from Arabidopsis thaliana.</title>
        <authorList>
            <person name="Jones A.M.E."/>
            <person name="MacLean D."/>
            <person name="Studholme D.J."/>
            <person name="Serna-Sanz A."/>
            <person name="Andreasson E."/>
            <person name="Rathjen J.P."/>
            <person name="Peck S.C."/>
        </authorList>
    </citation>
    <scope>PHOSPHORYLATION [LARGE SCALE ANALYSIS] AT THR-962</scope>
    <scope>IDENTIFICATION BY MASS SPECTROMETRY [LARGE SCALE ANALYSIS]</scope>
    <source>
        <strain>cv. Columbia</strain>
    </source>
</reference>
<reference key="9">
    <citation type="journal article" date="2010" name="Plant Signal. Behav.">
        <title>ABA transport factors found in Arabidopsis ABC transporters.</title>
        <authorList>
            <person name="Kuromori T."/>
            <person name="Shinozaki K."/>
        </authorList>
    </citation>
    <scope>REVIEW ON ABSCISIC ACID HOMEOSTASIS</scope>
</reference>
<reference key="10">
    <citation type="journal article" date="2010" name="Proc. Natl. Acad. Sci. U.S.A.">
        <title>PDR-type ABC transporter mediates cellular uptake of the phytohormone abscisic acid.</title>
        <authorList>
            <person name="Kang J."/>
            <person name="Hwang J.-U."/>
            <person name="Lee M."/>
            <person name="Kim Y.-Y."/>
            <person name="Assmann S.M."/>
            <person name="Martinoia E."/>
            <person name="Lee Y."/>
        </authorList>
    </citation>
    <scope>FUNCTION</scope>
    <scope>DISRUPTION PHENOTYPE</scope>
    <scope>CATALYTIC ACTIVITY</scope>
    <scope>ACTIVITY REGULATION</scope>
    <scope>BIOPHYSICOCHEMICAL PROPERTIES</scope>
    <scope>SUBCELLULAR LOCATION</scope>
    <scope>TISSUE SPECIFICITY</scope>
    <scope>DEVELOPMENTAL STAGE</scope>
    <scope>INDUCTION BY ABSCISIC ACID</scope>
    <source>
        <strain>cv. Columbia</strain>
    </source>
</reference>
<reference key="11">
    <citation type="journal article" date="2012" name="Plant Sci.">
        <title>Transcriptional response of abscisic acid (ABA) metabolism and transport to cold and heat stress applied at the reproductive stage of development in Arabidopsis thaliana.</title>
        <authorList>
            <person name="Baron K.N."/>
            <person name="Schroeder D.F."/>
            <person name="Stasolla C."/>
        </authorList>
    </citation>
    <scope>INDUCTION BY STRESS</scope>
    <scope>TISSUE SPECIFICITY</scope>
</reference>
<reference key="12">
    <citation type="journal article" date="2015" name="Biochem. Soc. Trans.">
        <title>The role of ABCG-type ABC transporters in phytohormone transport.</title>
        <authorList>
            <person name="Borghi L."/>
            <person name="Kang J."/>
            <person name="Ko D."/>
            <person name="Lee Y."/>
            <person name="Martinoia E."/>
        </authorList>
    </citation>
    <scope>REVIEW ON PHYTOHORMONE TRANSPORT</scope>
</reference>
<reference key="13">
    <citation type="journal article" date="2015" name="Mol. Plant Microbe Interact.">
        <title>Arabidopsis lectin receptor kinases LecRK-IX.1 and LecRK-IX.2 are functional analogs in regulating phytophthora resistance and plant cell death.</title>
        <authorList>
            <person name="Wang Y."/>
            <person name="Cordewener J.H.G."/>
            <person name="America A.H.P."/>
            <person name="Shan W."/>
            <person name="Bouwmeester K."/>
            <person name="Govers F."/>
        </authorList>
    </citation>
    <scope>FUNCTION</scope>
    <scope>DISRUPTION PHENOTYPE</scope>
    <scope>INTERACTION WITH LECRK91 AND LECRK92</scope>
</reference>
<reference key="14">
    <citation type="journal article" date="2015" name="Nat. Commun.">
        <title>Abscisic acid transporters cooperate to control seed germination.</title>
        <authorList>
            <person name="Kang J."/>
            <person name="Yim S."/>
            <person name="Choi H."/>
            <person name="Kim A."/>
            <person name="Lee K.P."/>
            <person name="Lopez-Molina L."/>
            <person name="Martinoia E."/>
            <person name="Lee Y."/>
        </authorList>
    </citation>
    <scope>FUNCTION</scope>
    <scope>DISRUPTION PHENOTYPE</scope>
    <scope>CATALYTIC ACTIVITY</scope>
    <scope>TISSUE SPECIFICITY</scope>
    <source>
        <strain>cv. Columbia</strain>
    </source>
</reference>
<reference key="15">
    <citation type="journal article" date="2016" name="Plant Mol. Biol.">
        <title>WRKY1 regulates stomatal movement in drought-stressed Arabidopsis thaliana.</title>
        <authorList>
            <person name="Qiao Z."/>
            <person name="Li C.-L."/>
            <person name="Zhang W."/>
        </authorList>
    </citation>
    <scope>INDUCTION BY ABSCISIC ACID AND DROUGHT</scope>
</reference>
<sequence length="1423" mass="161017">MEGTSFHQASNSMRRNSSVWKKDSGREIFSRSSREEDDEEALRWAALEKLPTFDRLRKGILTASHAGGPINEIDIQKLGFQDTKKLLERLIKVGDDEHEKLLWKLKKRIDRVGIDLPTIEVRFDHLKVEAEVHVGGRALPTFVNFISNFADKFLNTLHLVPNRKKKFTILNDVSGIVKPGRMALLLGPPSSGKTTLLLALAGKLDQELKQTGRVTYNGHGMNEFVPQRTAAYIGQNDVHIGEMTVRETFAYAARFQGVGSRYDMLTELARREKEANIKPDPDIDIFMKAMSTAGEKTNVMTDYILKILGLEVCADTMVGDDMLRGISGGQKKRVTTGEMLVGPSRALFMDEISTGLDSSTTYQIVNSLRNYVHIFNGTALISLLQPAPETFNLFDDIILIAEGEIIYEGPRDHVVEFFETMGFKCPPRKGVADFLQEVTSKKDQMQYWARRDEPYRFIRVREFAEAFQSFHVGRRIGDELALPFDKTKSHPAALTTKKYGVGIKELVKTSFSREYLLMKRNSFVYYFKFGQLLVMAFLTMTLFFRTEMQKKTEVDGSLYTGALFFILMMLMFNGMSELSMTIAKLPVFYKQRDLLFYPAWVYSLPPWLLKIPISFMEAALTTFITYYVIGFDPNVGRLFKQYILLVLMNQMASALFKMVAALGRNMIVANTFGAFAMLVFFALGGVVLSRDDIKKWWIWGYWISPIMYGQNAILANEFFGHSWSRAVENSSETLGVTFLKSRGFLPHAYWYWIGTGALLGFVVLFNFGFTLALTFLNSLGKPQAVIAEEPASDETELQSARSEGVVEAGANKKRGMVLPFEPHSITFDNVVYSVDMPQEMIEQGTQEDRLVLLKGVNGAFRPGVLTALMGVSGAGKTTLMDVLAGRKTGGYIDGNITISGYPKNQQTFARISGYCEQTDIHSPHVTVYESLVYSAWLRLPKEVDKNKRKIFIEEVMELVELTPLRQALVGLPGESGLSTEQRKRLTIAVELVANPSIIFMDEPTSGLDARAAAIVMRTVRNTVDTGRTVVCTIHQPSIDIFEAFDELFLLKRGGEEIYVGPLGHESTHLINYFESIQGINKITEGYNPATWMLEVSTTSQEAALGVDFAQVYKNSELYKRNKELIKELSQPAPGSKDLYFPTQYSQSFLTQCMASLWKQHWSYWRNPPYTAVRFLFTIGIALMFGTMFWDLGGKTKTRQDLSNAMGSMYTAVLFLGLQNAASVQPVVNVERTVFYREQAAGMYSAMPYAFAQVFIEIPYVLVQAIVYGLIVYAMIGFEWTAVKFFWYLFFMYGSFLTFTFYGMMAVAMTPNHHIASVVSSAFYGIWNLFSGFLIPRPSMPVWWEWYYWLCPVAWTLYGLIASQFGDITEPMADSNMSVKQFIREFYGYREGFLGVVAAMNVIFPLLFAVIFAIGIKSFNFQKR</sequence>
<dbReference type="EMBL" id="AC013453">
    <property type="protein sequence ID" value="AAF71978.1"/>
    <property type="molecule type" value="Genomic_DNA"/>
</dbReference>
<dbReference type="EMBL" id="CP002684">
    <property type="protein sequence ID" value="AEE29332.1"/>
    <property type="molecule type" value="Genomic_DNA"/>
</dbReference>
<dbReference type="EMBL" id="BK001011">
    <property type="protein sequence ID" value="DAA00880.1"/>
    <property type="molecule type" value="Genomic_DNA"/>
</dbReference>
<dbReference type="PIR" id="A86289">
    <property type="entry name" value="A86289"/>
</dbReference>
<dbReference type="RefSeq" id="NP_173005.1">
    <property type="nucleotide sequence ID" value="NM_101421.3"/>
</dbReference>
<dbReference type="SMR" id="Q9M9E1"/>
<dbReference type="FunCoup" id="Q9M9E1">
    <property type="interactions" value="209"/>
</dbReference>
<dbReference type="IntAct" id="Q9M9E1">
    <property type="interactions" value="1"/>
</dbReference>
<dbReference type="STRING" id="3702.Q9M9E1"/>
<dbReference type="TCDB" id="3.A.1.205.10">
    <property type="family name" value="the atp-binding cassette (abc) superfamily"/>
</dbReference>
<dbReference type="GlyCosmos" id="Q9M9E1">
    <property type="glycosylation" value="5 sites, No reported glycans"/>
</dbReference>
<dbReference type="GlyGen" id="Q9M9E1">
    <property type="glycosylation" value="5 sites"/>
</dbReference>
<dbReference type="iPTMnet" id="Q9M9E1"/>
<dbReference type="PaxDb" id="3702-AT1G15520.1"/>
<dbReference type="ProteomicsDB" id="244393"/>
<dbReference type="EnsemblPlants" id="AT1G15520.1">
    <property type="protein sequence ID" value="AT1G15520.1"/>
    <property type="gene ID" value="AT1G15520"/>
</dbReference>
<dbReference type="GeneID" id="838122"/>
<dbReference type="Gramene" id="AT1G15520.1">
    <property type="protein sequence ID" value="AT1G15520.1"/>
    <property type="gene ID" value="AT1G15520"/>
</dbReference>
<dbReference type="KEGG" id="ath:AT1G15520"/>
<dbReference type="Araport" id="AT1G15520"/>
<dbReference type="TAIR" id="AT1G15520">
    <property type="gene designation" value="ABCG40"/>
</dbReference>
<dbReference type="eggNOG" id="KOG0065">
    <property type="taxonomic scope" value="Eukaryota"/>
</dbReference>
<dbReference type="HOGENOM" id="CLU_000604_35_6_1"/>
<dbReference type="InParanoid" id="Q9M9E1"/>
<dbReference type="OMA" id="RNFGFIC"/>
<dbReference type="OrthoDB" id="245989at2759"/>
<dbReference type="PhylomeDB" id="Q9M9E1"/>
<dbReference type="PRO" id="PR:Q9M9E1"/>
<dbReference type="Proteomes" id="UP000006548">
    <property type="component" value="Chromosome 1"/>
</dbReference>
<dbReference type="ExpressionAtlas" id="Q9M9E1">
    <property type="expression patterns" value="baseline and differential"/>
</dbReference>
<dbReference type="GO" id="GO:0005886">
    <property type="term" value="C:plasma membrane"/>
    <property type="evidence" value="ECO:0000314"/>
    <property type="project" value="TAIR"/>
</dbReference>
<dbReference type="GO" id="GO:0140359">
    <property type="term" value="F:ABC-type transporter activity"/>
    <property type="evidence" value="ECO:0007669"/>
    <property type="project" value="InterPro"/>
</dbReference>
<dbReference type="GO" id="GO:0005524">
    <property type="term" value="F:ATP binding"/>
    <property type="evidence" value="ECO:0007669"/>
    <property type="project" value="UniProtKB-KW"/>
</dbReference>
<dbReference type="GO" id="GO:0016887">
    <property type="term" value="F:ATP hydrolysis activity"/>
    <property type="evidence" value="ECO:0007669"/>
    <property type="project" value="InterPro"/>
</dbReference>
<dbReference type="GO" id="GO:0042626">
    <property type="term" value="F:ATPase-coupled transmembrane transporter activity"/>
    <property type="evidence" value="ECO:0000315"/>
    <property type="project" value="UniProtKB"/>
</dbReference>
<dbReference type="GO" id="GO:0015562">
    <property type="term" value="F:efflux transmembrane transporter activity"/>
    <property type="evidence" value="ECO:0000315"/>
    <property type="project" value="UniProtKB"/>
</dbReference>
<dbReference type="GO" id="GO:0080168">
    <property type="term" value="P:abscisic acid transport"/>
    <property type="evidence" value="ECO:0000314"/>
    <property type="project" value="UniProtKB"/>
</dbReference>
<dbReference type="GO" id="GO:0009738">
    <property type="term" value="P:abscisic acid-activated signaling pathway"/>
    <property type="evidence" value="ECO:0000315"/>
    <property type="project" value="UniProtKB"/>
</dbReference>
<dbReference type="GO" id="GO:0042631">
    <property type="term" value="P:cellular response to water deprivation"/>
    <property type="evidence" value="ECO:0000315"/>
    <property type="project" value="UniProtKB"/>
</dbReference>
<dbReference type="GO" id="GO:0002229">
    <property type="term" value="P:defense response to oomycetes"/>
    <property type="evidence" value="ECO:0000315"/>
    <property type="project" value="UniProtKB"/>
</dbReference>
<dbReference type="GO" id="GO:0098739">
    <property type="term" value="P:import across plasma membrane"/>
    <property type="evidence" value="ECO:0000315"/>
    <property type="project" value="UniProtKB"/>
</dbReference>
<dbReference type="GO" id="GO:0098657">
    <property type="term" value="P:import into cell"/>
    <property type="evidence" value="ECO:0000315"/>
    <property type="project" value="UniProtKB"/>
</dbReference>
<dbReference type="GO" id="GO:0010496">
    <property type="term" value="P:intercellular transport"/>
    <property type="evidence" value="ECO:0000315"/>
    <property type="project" value="UniProtKB"/>
</dbReference>
<dbReference type="GO" id="GO:0015692">
    <property type="term" value="P:lead ion transport"/>
    <property type="evidence" value="ECO:0000315"/>
    <property type="project" value="TAIR"/>
</dbReference>
<dbReference type="GO" id="GO:0048581">
    <property type="term" value="P:negative regulation of post-embryonic development"/>
    <property type="evidence" value="ECO:0000315"/>
    <property type="project" value="UniProtKB"/>
</dbReference>
<dbReference type="GO" id="GO:0009737">
    <property type="term" value="P:response to abscisic acid"/>
    <property type="evidence" value="ECO:0000270"/>
    <property type="project" value="UniProtKB"/>
</dbReference>
<dbReference type="GO" id="GO:0009409">
    <property type="term" value="P:response to cold"/>
    <property type="evidence" value="ECO:0000270"/>
    <property type="project" value="UniProtKB"/>
</dbReference>
<dbReference type="GO" id="GO:0009723">
    <property type="term" value="P:response to ethylene"/>
    <property type="evidence" value="ECO:0000304"/>
    <property type="project" value="TAIR"/>
</dbReference>
<dbReference type="GO" id="GO:0009408">
    <property type="term" value="P:response to heat"/>
    <property type="evidence" value="ECO:0000270"/>
    <property type="project" value="UniProtKB"/>
</dbReference>
<dbReference type="GO" id="GO:0009753">
    <property type="term" value="P:response to jasmonic acid"/>
    <property type="evidence" value="ECO:0000304"/>
    <property type="project" value="TAIR"/>
</dbReference>
<dbReference type="GO" id="GO:0010193">
    <property type="term" value="P:response to ozone"/>
    <property type="evidence" value="ECO:0000270"/>
    <property type="project" value="TAIR"/>
</dbReference>
<dbReference type="GO" id="GO:0009751">
    <property type="term" value="P:response to salicylic acid"/>
    <property type="evidence" value="ECO:0000304"/>
    <property type="project" value="TAIR"/>
</dbReference>
<dbReference type="GO" id="GO:0009414">
    <property type="term" value="P:response to water deprivation"/>
    <property type="evidence" value="ECO:0000270"/>
    <property type="project" value="UniProtKB"/>
</dbReference>
<dbReference type="GO" id="GO:0090332">
    <property type="term" value="P:stomatal closure"/>
    <property type="evidence" value="ECO:0000315"/>
    <property type="project" value="UniProtKB"/>
</dbReference>
<dbReference type="GO" id="GO:0046865">
    <property type="term" value="P:terpenoid transport"/>
    <property type="evidence" value="ECO:0000314"/>
    <property type="project" value="TAIR"/>
</dbReference>
<dbReference type="GO" id="GO:0055085">
    <property type="term" value="P:transmembrane transport"/>
    <property type="evidence" value="ECO:0000315"/>
    <property type="project" value="UniProtKB"/>
</dbReference>
<dbReference type="CDD" id="cd03232">
    <property type="entry name" value="ABCG_PDR_domain2"/>
    <property type="match status" value="1"/>
</dbReference>
<dbReference type="FunFam" id="3.40.50.300:FF:000179">
    <property type="entry name" value="ABC transporter G family member 34"/>
    <property type="match status" value="1"/>
</dbReference>
<dbReference type="FunFam" id="3.40.50.300:FF:000059">
    <property type="entry name" value="ABC transporter G family member 40"/>
    <property type="match status" value="1"/>
</dbReference>
<dbReference type="Gene3D" id="3.40.50.300">
    <property type="entry name" value="P-loop containing nucleotide triphosphate hydrolases"/>
    <property type="match status" value="2"/>
</dbReference>
<dbReference type="InterPro" id="IPR003593">
    <property type="entry name" value="AAA+_ATPase"/>
</dbReference>
<dbReference type="InterPro" id="IPR013525">
    <property type="entry name" value="ABC2_TM"/>
</dbReference>
<dbReference type="InterPro" id="IPR029481">
    <property type="entry name" value="ABC_trans_N"/>
</dbReference>
<dbReference type="InterPro" id="IPR003439">
    <property type="entry name" value="ABC_transporter-like_ATP-bd"/>
</dbReference>
<dbReference type="InterPro" id="IPR043926">
    <property type="entry name" value="ABCG_dom"/>
</dbReference>
<dbReference type="InterPro" id="IPR034003">
    <property type="entry name" value="ABCG_PDR_2"/>
</dbReference>
<dbReference type="InterPro" id="IPR027417">
    <property type="entry name" value="P-loop_NTPase"/>
</dbReference>
<dbReference type="InterPro" id="IPR013581">
    <property type="entry name" value="PDR_assoc"/>
</dbReference>
<dbReference type="PANTHER" id="PTHR48040:SF20">
    <property type="entry name" value="PLEIOTROPIC DRUG RESISTANCE PROTEIN 1"/>
    <property type="match status" value="1"/>
</dbReference>
<dbReference type="PANTHER" id="PTHR48040">
    <property type="entry name" value="PLEIOTROPIC DRUG RESISTANCE PROTEIN 1-LIKE ISOFORM X1"/>
    <property type="match status" value="1"/>
</dbReference>
<dbReference type="Pfam" id="PF01061">
    <property type="entry name" value="ABC2_membrane"/>
    <property type="match status" value="2"/>
</dbReference>
<dbReference type="Pfam" id="PF19055">
    <property type="entry name" value="ABC2_membrane_7"/>
    <property type="match status" value="1"/>
</dbReference>
<dbReference type="Pfam" id="PF00005">
    <property type="entry name" value="ABC_tran"/>
    <property type="match status" value="2"/>
</dbReference>
<dbReference type="Pfam" id="PF14510">
    <property type="entry name" value="ABC_trans_N"/>
    <property type="match status" value="1"/>
</dbReference>
<dbReference type="Pfam" id="PF08370">
    <property type="entry name" value="PDR_assoc"/>
    <property type="match status" value="1"/>
</dbReference>
<dbReference type="SMART" id="SM00382">
    <property type="entry name" value="AAA"/>
    <property type="match status" value="2"/>
</dbReference>
<dbReference type="SUPFAM" id="SSF52540">
    <property type="entry name" value="P-loop containing nucleoside triphosphate hydrolases"/>
    <property type="match status" value="2"/>
</dbReference>
<dbReference type="PROSITE" id="PS50893">
    <property type="entry name" value="ABC_TRANSPORTER_2"/>
    <property type="match status" value="2"/>
</dbReference>
<gene>
    <name evidence="16" type="primary">ABCG40</name>
    <name evidence="14 15" type="synonym">PDR12</name>
    <name evidence="16" type="synonym">PDR9</name>
    <name evidence="20" type="ordered locus">At1g15520</name>
    <name evidence="21" type="ORF">T16N11.3</name>
</gene>
<proteinExistence type="evidence at protein level"/>
<protein>
    <recommendedName>
        <fullName evidence="16">ABC transporter G family member 40</fullName>
        <shortName evidence="16">ABC transporter ABCG.40</shortName>
        <shortName evidence="16">AtABCG40</shortName>
    </recommendedName>
    <alternativeName>
        <fullName evidence="14 15">Pleiotropic drug resistance protein 12</fullName>
    </alternativeName>
</protein>
<evidence type="ECO:0000250" key="1">
    <source>
        <dbReference type="UniProtKB" id="Q76CU2"/>
    </source>
</evidence>
<evidence type="ECO:0000255" key="2"/>
<evidence type="ECO:0000255" key="3">
    <source>
        <dbReference type="PROSITE-ProRule" id="PRU00434"/>
    </source>
</evidence>
<evidence type="ECO:0000255" key="4">
    <source>
        <dbReference type="PROSITE-ProRule" id="PRU00498"/>
    </source>
</evidence>
<evidence type="ECO:0000256" key="5">
    <source>
        <dbReference type="SAM" id="MobiDB-lite"/>
    </source>
</evidence>
<evidence type="ECO:0000269" key="6">
    <source>
    </source>
</evidence>
<evidence type="ECO:0000269" key="7">
    <source>
    </source>
</evidence>
<evidence type="ECO:0000269" key="8">
    <source>
    </source>
</evidence>
<evidence type="ECO:0000269" key="9">
    <source>
    </source>
</evidence>
<evidence type="ECO:0000269" key="10">
    <source>
    </source>
</evidence>
<evidence type="ECO:0000269" key="11">
    <source>
    </source>
</evidence>
<evidence type="ECO:0000269" key="12">
    <source>
    </source>
</evidence>
<evidence type="ECO:0000269" key="13">
    <source>
    </source>
</evidence>
<evidence type="ECO:0000303" key="14">
    <source>
    </source>
</evidence>
<evidence type="ECO:0000303" key="15">
    <source>
    </source>
</evidence>
<evidence type="ECO:0000303" key="16">
    <source>
    </source>
</evidence>
<evidence type="ECO:0000303" key="17">
    <source>
    </source>
</evidence>
<evidence type="ECO:0000303" key="18">
    <source>
    </source>
</evidence>
<evidence type="ECO:0000305" key="19"/>
<evidence type="ECO:0000312" key="20">
    <source>
        <dbReference type="Araport" id="AT1G15520"/>
    </source>
</evidence>
<evidence type="ECO:0000312" key="21">
    <source>
        <dbReference type="EMBL" id="AAF71978.1"/>
    </source>
</evidence>
<evidence type="ECO:0007744" key="22">
    <source>
    </source>
</evidence>